<name>MEP72_PSEAE</name>
<feature type="signal peptide" evidence="2">
    <location>
        <begin position="1"/>
        <end position="20"/>
    </location>
</feature>
<feature type="chain" id="PRO_5004326926" description="Peptidyl-Asp metalloendopeptidase">
    <location>
        <begin position="21"/>
        <end status="unknown"/>
    </location>
</feature>
<feature type="propeptide" id="PRO_0000452832" evidence="10">
    <location>
        <begin status="unknown"/>
        <end position="599"/>
    </location>
</feature>
<feature type="domain" description="CBM-cenC" evidence="2">
    <location>
        <begin position="458"/>
        <end position="583"/>
    </location>
</feature>
<feature type="region of interest" description="Disordered" evidence="3">
    <location>
        <begin position="265"/>
        <end position="285"/>
    </location>
</feature>
<feature type="active site" evidence="9">
    <location>
        <position position="165"/>
    </location>
</feature>
<feature type="binding site" evidence="9">
    <location>
        <position position="164"/>
    </location>
    <ligand>
        <name>Zn(2+)</name>
        <dbReference type="ChEBI" id="CHEBI:29105"/>
        <note>catalytic</note>
    </ligand>
</feature>
<feature type="binding site" evidence="9">
    <location>
        <position position="168"/>
    </location>
    <ligand>
        <name>Zn(2+)</name>
        <dbReference type="ChEBI" id="CHEBI:29105"/>
        <note>catalytic</note>
    </ligand>
</feature>
<feature type="binding site" evidence="9">
    <location>
        <position position="174"/>
    </location>
    <ligand>
        <name>Zn(2+)</name>
        <dbReference type="ChEBI" id="CHEBI:29105"/>
        <note>catalytic</note>
    </ligand>
</feature>
<gene>
    <name evidence="6" type="primary">mep72</name>
    <name evidence="11" type="ordered locus">PA2783</name>
</gene>
<keyword id="KW-0068">Autocatalytic cleavage</keyword>
<keyword id="KW-0378">Hydrolase</keyword>
<keyword id="KW-0479">Metal-binding</keyword>
<keyword id="KW-0482">Metalloprotease</keyword>
<keyword id="KW-0645">Protease</keyword>
<keyword id="KW-1185">Reference proteome</keyword>
<keyword id="KW-0964">Secreted</keyword>
<keyword id="KW-0732">Signal</keyword>
<keyword id="KW-0862">Zinc</keyword>
<keyword id="KW-0865">Zymogen</keyword>
<comment type="function">
    <text evidence="1 4 5">Metalloprotease with endopeptidase activity (PubMed:24279383). Specifically cleaves on the N-terminal side of aspartyl, glutamyl and cysteic acid residues (By similarity). Mep72 appears to be a secreted biofilm-specific regulator that affects the processing of a very specific subset of virulence factors exported by the type III secretion machinery as well as flagellar proteins. Binds directly to ExoS and PcrV and affects the processing of these proteins in the biofilm secretome, but contrary to expectation, Mep72 seems to protect these targets against proteolytic processing/degradation (PubMed:25488299).</text>
</comment>
<comment type="catalytic activity">
    <reaction evidence="1">
        <text>Cleavage of Xaa-|-Asp, Xaa-|-Glu and Xaa-|-cysteic acid bonds.</text>
        <dbReference type="EC" id="3.4.24.33"/>
    </reaction>
</comment>
<comment type="cofactor">
    <cofactor evidence="9">
        <name>Zn(2+)</name>
        <dbReference type="ChEBI" id="CHEBI:29105"/>
    </cofactor>
    <text evidence="9">Binds 1 zinc ion per subunit.</text>
</comment>
<comment type="activity regulation">
    <text evidence="5">Is inhibited by BamI, the product of its coregulated adjacent gene.</text>
</comment>
<comment type="subunit">
    <text evidence="5">Interacts with BamI, the product of its coregulated adjacent gene, which inhibits its protease activity.</text>
</comment>
<comment type="subcellular location">
    <subcellularLocation>
        <location evidence="4 5">Secreted</location>
    </subcellularLocation>
    <text evidence="5">Is secreted through the type II general secretory pathway (Xcp system) and undergoes processing during export.</text>
</comment>
<comment type="induction">
    <text evidence="4 5">Its transcription is positively regulated by Vfr, the virulence factor regulator, in a cAMP-dependent manner (PubMed:24279383). Constitutes an operon together with PA2782 (PubMed:24279383, PubMed:25488299). Is expressed only during biofilm growth (PubMed:25488299).</text>
</comment>
<comment type="domain">
    <text evidence="4 5">Has a tridomain structure comprised of an N-terminal metzincin protease-like domain and two tandem C-terminal carbohydrate-binding domains.</text>
</comment>
<comment type="PTM">
    <text evidence="5">Made as a membrane-associated pre-pro-protein, which is exported to the periplasm with removal of the signal peptide, leading to a protein with a molecular mass of 65 kDa, that likely contains the metzincin domain plus tandem carbohydrate-binding domains. Undergoes processing during export to the extracellular milieu, probably by autocatalysis, yielding a (mature length) 25 kDa protein that most likely corresponds to the metzincin domain only.</text>
</comment>
<comment type="similarity">
    <text evidence="8">Belongs to the peptidase M72 family.</text>
</comment>
<reference key="1">
    <citation type="journal article" date="2000" name="Nature">
        <title>Complete genome sequence of Pseudomonas aeruginosa PAO1, an opportunistic pathogen.</title>
        <authorList>
            <person name="Stover C.K."/>
            <person name="Pham X.-Q.T."/>
            <person name="Erwin A.L."/>
            <person name="Mizoguchi S.D."/>
            <person name="Warrener P."/>
            <person name="Hickey M.J."/>
            <person name="Brinkman F.S.L."/>
            <person name="Hufnagle W.O."/>
            <person name="Kowalik D.J."/>
            <person name="Lagrou M."/>
            <person name="Garber R.L."/>
            <person name="Goltry L."/>
            <person name="Tolentino E."/>
            <person name="Westbrock-Wadman S."/>
            <person name="Yuan Y."/>
            <person name="Brody L.L."/>
            <person name="Coulter S.N."/>
            <person name="Folger K.R."/>
            <person name="Kas A."/>
            <person name="Larbig K."/>
            <person name="Lim R.M."/>
            <person name="Smith K.A."/>
            <person name="Spencer D.H."/>
            <person name="Wong G.K.-S."/>
            <person name="Wu Z."/>
            <person name="Paulsen I.T."/>
            <person name="Reizer J."/>
            <person name="Saier M.H. Jr."/>
            <person name="Hancock R.E.W."/>
            <person name="Lory S."/>
            <person name="Olson M.V."/>
        </authorList>
    </citation>
    <scope>NUCLEOTIDE SEQUENCE [LARGE SCALE GENOMIC DNA]</scope>
    <source>
        <strain>ATCC 15692 / DSM 22644 / CIP 104116 / JCM 14847 / LMG 12228 / 1C / PRS 101 / PAO1</strain>
    </source>
</reference>
<reference key="2">
    <citation type="journal article" date="2013" name="BMC Microbiol.">
        <title>Characterization of the Pseudomonas aeruginosa metalloendopeptidase, Mep72, a member of the Vfr regulon.</title>
        <authorList>
            <person name="Balyimez A."/>
            <person name="Colmer-Hamood J.A."/>
            <person name="San Francisco M."/>
            <person name="Hamood A.N."/>
        </authorList>
    </citation>
    <scope>FUNCTION</scope>
    <scope>COFACTOR</scope>
    <scope>INDUCTION</scope>
    <scope>SUBCELLULAR LOCATION</scope>
    <scope>DOMAIN</scope>
    <source>
        <strain>ATCC 15692 / DSM 22644 / CIP 104116 / JCM 14847 / LMG 12228 / 1C / PRS 101 / PAO1</strain>
    </source>
</reference>
<reference key="3">
    <citation type="journal article" date="2015" name="J. Bacteriol.">
        <title>Mep72, a metzincin protease that is preferentially secreted by biofilms of Pseudomonas aeruginosa.</title>
        <authorList>
            <person name="Passmore I.J."/>
            <person name="Nishikawa K."/>
            <person name="Lilley K.S."/>
            <person name="Bowden S.D."/>
            <person name="Chung J.C."/>
            <person name="Welch M."/>
        </authorList>
    </citation>
    <scope>FUNCTION</scope>
    <scope>SUBCELLULAR LOCATION</scope>
    <scope>INDUCTION</scope>
    <scope>DOMAIN</scope>
    <scope>IDENTIFICATION BY MASS SPECTROMETRY</scope>
    <scope>PROCESSING</scope>
    <scope>INTERACTION WITH BAMI</scope>
    <scope>ACTIVITY REGULATION</scope>
    <source>
        <strain>ATCC 15692 / DSM 22644 / CIP 104116 / JCM 14847 / LMG 12228 / 1C / PRS 101 / PAO1</strain>
    </source>
</reference>
<accession>Q9I060</accession>
<dbReference type="EC" id="3.4.24.33" evidence="1"/>
<dbReference type="EMBL" id="AE004091">
    <property type="protein sequence ID" value="AAG06171.1"/>
    <property type="molecule type" value="Genomic_DNA"/>
</dbReference>
<dbReference type="PIR" id="G83296">
    <property type="entry name" value="G83296"/>
</dbReference>
<dbReference type="RefSeq" id="NP_251473.1">
    <property type="nucleotide sequence ID" value="NC_002516.2"/>
</dbReference>
<dbReference type="RefSeq" id="WP_003114786.1">
    <property type="nucleotide sequence ID" value="NZ_QZGE01000011.1"/>
</dbReference>
<dbReference type="SMR" id="Q9I060"/>
<dbReference type="STRING" id="208964.PA2783"/>
<dbReference type="CAZy" id="CBM22">
    <property type="family name" value="Carbohydrate-Binding Module Family 22"/>
</dbReference>
<dbReference type="MEROPS" id="M72.001"/>
<dbReference type="PaxDb" id="208964-PA2783"/>
<dbReference type="GeneID" id="878794"/>
<dbReference type="KEGG" id="pae:PA2783"/>
<dbReference type="PATRIC" id="fig|208964.12.peg.2922"/>
<dbReference type="PseudoCAP" id="PA2783"/>
<dbReference type="HOGENOM" id="CLU_451179_0_0_6"/>
<dbReference type="InParanoid" id="Q9I060"/>
<dbReference type="OrthoDB" id="7053703at2"/>
<dbReference type="BioCyc" id="PAER208964:G1FZ6-2831-MONOMER"/>
<dbReference type="Proteomes" id="UP000002438">
    <property type="component" value="Chromosome"/>
</dbReference>
<dbReference type="GO" id="GO:0009279">
    <property type="term" value="C:cell outer membrane"/>
    <property type="evidence" value="ECO:0000314"/>
    <property type="project" value="PseudoCAP"/>
</dbReference>
<dbReference type="GO" id="GO:0005615">
    <property type="term" value="C:extracellular space"/>
    <property type="evidence" value="ECO:0000314"/>
    <property type="project" value="PseudoCAP"/>
</dbReference>
<dbReference type="GO" id="GO:0019867">
    <property type="term" value="C:outer membrane"/>
    <property type="evidence" value="ECO:0000314"/>
    <property type="project" value="PseudoCAP"/>
</dbReference>
<dbReference type="GO" id="GO:0004175">
    <property type="term" value="F:endopeptidase activity"/>
    <property type="evidence" value="ECO:0000314"/>
    <property type="project" value="PseudoCAP"/>
</dbReference>
<dbReference type="GO" id="GO:0016798">
    <property type="term" value="F:hydrolase activity, acting on glycosyl bonds"/>
    <property type="evidence" value="ECO:0007669"/>
    <property type="project" value="InterPro"/>
</dbReference>
<dbReference type="GO" id="GO:0046872">
    <property type="term" value="F:metal ion binding"/>
    <property type="evidence" value="ECO:0007669"/>
    <property type="project" value="UniProtKB-KW"/>
</dbReference>
<dbReference type="GO" id="GO:0008237">
    <property type="term" value="F:metallopeptidase activity"/>
    <property type="evidence" value="ECO:0007669"/>
    <property type="project" value="UniProtKB-KW"/>
</dbReference>
<dbReference type="GO" id="GO:0097264">
    <property type="term" value="P:self proteolysis"/>
    <property type="evidence" value="ECO:0000314"/>
    <property type="project" value="PseudoCAP"/>
</dbReference>
<dbReference type="FunFam" id="3.40.390.10:FF:000149">
    <property type="entry name" value="Carbohydrate-binding protein"/>
    <property type="match status" value="1"/>
</dbReference>
<dbReference type="Gene3D" id="3.40.390.10">
    <property type="entry name" value="Collagenase (Catalytic Domain)"/>
    <property type="match status" value="1"/>
</dbReference>
<dbReference type="Gene3D" id="2.60.120.260">
    <property type="entry name" value="Galactose-binding domain-like"/>
    <property type="match status" value="2"/>
</dbReference>
<dbReference type="InterPro" id="IPR003305">
    <property type="entry name" value="CenC_carb-bd"/>
</dbReference>
<dbReference type="InterPro" id="IPR008979">
    <property type="entry name" value="Galactose-bd-like_sf"/>
</dbReference>
<dbReference type="InterPro" id="IPR024079">
    <property type="entry name" value="MetalloPept_cat_dom_sf"/>
</dbReference>
<dbReference type="Pfam" id="PF02018">
    <property type="entry name" value="CBM_4_9"/>
    <property type="match status" value="1"/>
</dbReference>
<dbReference type="Pfam" id="PF13582">
    <property type="entry name" value="Reprolysin_3"/>
    <property type="match status" value="1"/>
</dbReference>
<dbReference type="SUPFAM" id="SSF49785">
    <property type="entry name" value="Galactose-binding domain-like"/>
    <property type="match status" value="2"/>
</dbReference>
<dbReference type="SUPFAM" id="SSF55486">
    <property type="entry name" value="Metalloproteases ('zincins'), catalytic domain"/>
    <property type="match status" value="1"/>
</dbReference>
<proteinExistence type="evidence at protein level"/>
<protein>
    <recommendedName>
        <fullName evidence="8">Peptidyl-Asp metalloendopeptidase</fullName>
        <ecNumber evidence="1">3.4.24.33</ecNumber>
    </recommendedName>
    <alternativeName>
        <fullName evidence="7">Biofilm-associated metzincin protease</fullName>
    </alternativeName>
    <alternativeName>
        <fullName evidence="6">Metalloendopeptidase Mep72</fullName>
    </alternativeName>
</protein>
<evidence type="ECO:0000250" key="1">
    <source>
        <dbReference type="UniProtKB" id="Q9R4J4"/>
    </source>
</evidence>
<evidence type="ECO:0000255" key="2"/>
<evidence type="ECO:0000256" key="3">
    <source>
        <dbReference type="SAM" id="MobiDB-lite"/>
    </source>
</evidence>
<evidence type="ECO:0000269" key="4">
    <source>
    </source>
</evidence>
<evidence type="ECO:0000269" key="5">
    <source>
    </source>
</evidence>
<evidence type="ECO:0000303" key="6">
    <source>
    </source>
</evidence>
<evidence type="ECO:0000303" key="7">
    <source>
    </source>
</evidence>
<evidence type="ECO:0000305" key="8"/>
<evidence type="ECO:0000305" key="9">
    <source>
    </source>
</evidence>
<evidence type="ECO:0000305" key="10">
    <source>
    </source>
</evidence>
<evidence type="ECO:0000312" key="11">
    <source>
        <dbReference type="EMBL" id="AAG06171.1"/>
    </source>
</evidence>
<organism>
    <name type="scientific">Pseudomonas aeruginosa (strain ATCC 15692 / DSM 22644 / CIP 104116 / JCM 14847 / LMG 12228 / 1C / PRS 101 / PAO1)</name>
    <dbReference type="NCBI Taxonomy" id="208964"/>
    <lineage>
        <taxon>Bacteria</taxon>
        <taxon>Pseudomonadati</taxon>
        <taxon>Pseudomonadota</taxon>
        <taxon>Gammaproteobacteria</taxon>
        <taxon>Pseudomonadales</taxon>
        <taxon>Pseudomonadaceae</taxon>
        <taxon>Pseudomonas</taxon>
    </lineage>
</organism>
<sequence>MKKSLLCSTLALAVASAAQAAPKTVDIMVLYTPAATQTANGRDIDARIASYIEFANTAYEKSGVNLRLRLVHKQRLDWADYPTVTGANLDRFMRDPQVQRLREQYGADLVSLVNRSQNSGNGYITCGIGYMGSGDKNSGRFHGNAKDIAYNLTGVDCGLNTFAHEAGHNMGLRHSYEQDLESSYYDPRYAHSGTYEWSRGYGVQGRFATVMAYPHAFGTNKQAPFFANPRLVNAECANQPCGREEHADAVRALNSMATQIADFRPTKVPGTVNPGSGGDTPTPPDLPWCTKAKLGGLLGDGEFASMEGWRAWSGNAQLSLVNVAKGCRDNALLVDVRGFDLLVRPIAPLRAGSGYRLSGKVMLKAANTRETVRMALLSERADGALAYNPAQSVELSVSGNEFSRLEKTFDYRPAADQRNLYVAVWSDSGASLLVDEMNLQEAQAAPPSVPPAPKRIAYDFESGIGGWSGVHASARATRVASAGRLALEAYQRRYAGTGASTSLLGNLEAGRTYAFSADVRVGDGRGSQAMTYAYLYLESQGRPGEYLPLGYKVVENGRWASLRGQVQLPKGPIKRAELMILSGNQQESMFIDNVQLLQK</sequence>